<name>RN111_MOUSE</name>
<comment type="function">
    <text evidence="1 5 6 7 8">E3 ubiquitin-protein ligase required for mesoderm patterning during embryonic development (PubMed:11298452). Acts as an enhancer of the transcriptional responses of the SMAD2/SMAD3 effectors, which are activated downstream of BMP (PubMed:14657019). Acts by mediating ubiquitination and degradation of SMAD inhibitors such as SMAD7, inducing their proteasomal degradation and thereby enhancing the transcriptional activity of TGF-beta and BMP (PubMed:14657019). In addition to enhance transcription of SMAD2/SMAD3 effectors, also regulates their turnover by mediating their ubiquitination and subsequent degradation, coupling their activation with degradation, thereby ensuring that only effectors 'in use' are degraded (By similarity). Activates SMAD3/SMAD4-dependent transcription by triggering signal-induced degradation of SNON isoform of SKIL (By similarity). Associates with UBE2D2 as an E2 enzyme (By similarity). Specifically binds polysumoylated chains via SUMO interaction motifs (SIMs) and mediates ubiquitination of sumoylated substrates (PubMed:23530056). Catalyzes 'Lys-63'-linked ubiquitination of sumoylated XPC in response to UV irradiation, promoting nucleotide excision repair (By similarity). Mediates ubiquitination and degradation of sumoylated PML (PubMed:23530056). The regulation of the BMP-SMAD signaling is however independent of sumoylation and is not dependent of SUMO interaction motifs (SIMs) (PubMed:23530056).</text>
</comment>
<comment type="catalytic activity">
    <reaction evidence="8">
        <text>S-ubiquitinyl-[E2 ubiquitin-conjugating enzyme]-L-cysteine + [acceptor protein]-L-lysine = [E2 ubiquitin-conjugating enzyme]-L-cysteine + N(6)-ubiquitinyl-[acceptor protein]-L-lysine.</text>
        <dbReference type="EC" id="2.3.2.27"/>
    </reaction>
</comment>
<comment type="activity regulation">
    <text evidence="2">Binds free ubiquitin non-covalently via its RING-type zinc finger. Ubiquitin-binding leads to enhance the E3 ubiquitin-protein ligase activity by stabilizing the ubiquitin-conjugating enzyme E2 (donor ubiquitin) in the 'closed' conformation and activating ubiquitin transfer.</text>
</comment>
<comment type="pathway">
    <text>Protein modification; protein ubiquitination.</text>
</comment>
<comment type="subunit">
    <text evidence="1 6 7 8">Monomer (By similarity). Interacts with SMAD6, SMAD7, AXIN1, AXIN2 and SKIL isoform SNON (PubMed:14657019). Interacts with (phosphorylated) SMAD2 and SMAD3 (PubMed:17341133). Part of a complex containing RNF111, AXIN1 and SMAD7 (By similarity). Interacts (via SIM domains) with SUMO1 and SUMO2 (PubMed:23530056).</text>
</comment>
<comment type="interaction">
    <interactant intactId="EBI-646015">
        <id>Q99ML9</id>
    </interactant>
    <interactant intactId="EBI-2365912">
        <id>O35625</id>
        <label>Axin1</label>
    </interactant>
    <organismsDiffer>false</organismsDiffer>
    <experiments>4</experiments>
</comment>
<comment type="interaction">
    <interactant intactId="EBI-646015">
        <id>Q99ML9</id>
    </interactant>
    <interactant intactId="EBI-710484">
        <id>O15169</id>
        <label>AXIN1</label>
    </interactant>
    <organismsDiffer>true</organismsDiffer>
    <experiments>5</experiments>
</comment>
<comment type="interaction">
    <interactant intactId="EBI-646015">
        <id>Q99ML9</id>
    </interactant>
    <interactant intactId="EBI-3861591">
        <id>O15105</id>
        <label>SMAD7</label>
    </interactant>
    <organismsDiffer>true</organismsDiffer>
    <experiments>2</experiments>
</comment>
<comment type="subcellular location">
    <subcellularLocation>
        <location evidence="6">Nucleus</location>
    </subcellularLocation>
    <subcellularLocation>
        <location evidence="1">Cytoplasm</location>
    </subcellularLocation>
    <subcellularLocation>
        <location evidence="8">Nucleus</location>
        <location evidence="8">PML body</location>
    </subcellularLocation>
    <text evidence="1">Upon TGF-beta treatment, translocates from nucleus to cytosol.</text>
</comment>
<comment type="alternative products">
    <event type="alternative splicing"/>
    <isoform>
        <id>Q99ML9-1</id>
        <name>1</name>
        <sequence type="displayed"/>
    </isoform>
    <isoform>
        <id>Q99ML9-2</id>
        <name>2</name>
        <sequence type="described" ref="VSP_023842"/>
    </isoform>
</comment>
<comment type="tissue specificity">
    <text evidence="5">Ubiquitously expressed.</text>
</comment>
<comment type="developmental stage">
    <text evidence="5">Ubiquitously expressed from ES cells to midgestation.</text>
</comment>
<comment type="domain">
    <text evidence="8">The SUMO interaction motifs (SIMs) mediates the binding to polysumoylated substrate.</text>
</comment>
<comment type="domain">
    <text evidence="2">The RING-type zinc finger mediates the E3 ubiquitin-protein ligase activity and binds directly to free ubiquitin. Non-covalent ubiquitin-binding stabilizes the ubiquitin-conjugating enzyme E2 (donor ubiquitin) in the 'closed' conformation and stimulates ubiquitin transfer.</text>
</comment>
<comment type="disruption phenotype">
    <text evidence="5">Mice rarely develop beyond 15 somites, have a reduced head, fail to undergo turning and die at midgestation.</text>
</comment>
<comment type="similarity">
    <text evidence="11">Belongs to the Arkadia family.</text>
</comment>
<protein>
    <recommendedName>
        <fullName evidence="12">E3 ubiquitin-protein ligase Arkadia</fullName>
        <ecNumber evidence="8">2.3.2.27</ecNumber>
    </recommendedName>
    <alternativeName>
        <fullName evidence="13">RING finger protein 111</fullName>
    </alternativeName>
    <alternativeName>
        <fullName evidence="11">RING-type E3 ubiquitin transferase Arkadia</fullName>
    </alternativeName>
</protein>
<proteinExistence type="evidence at protein level"/>
<keyword id="KW-0025">Alternative splicing</keyword>
<keyword id="KW-0963">Cytoplasm</keyword>
<keyword id="KW-0217">Developmental protein</keyword>
<keyword id="KW-0227">DNA damage</keyword>
<keyword id="KW-0234">DNA repair</keyword>
<keyword id="KW-1017">Isopeptide bond</keyword>
<keyword id="KW-0479">Metal-binding</keyword>
<keyword id="KW-0539">Nucleus</keyword>
<keyword id="KW-1185">Reference proteome</keyword>
<keyword id="KW-0808">Transferase</keyword>
<keyword id="KW-0832">Ubl conjugation</keyword>
<keyword id="KW-0833">Ubl conjugation pathway</keyword>
<keyword id="KW-0862">Zinc</keyword>
<keyword id="KW-0863">Zinc-finger</keyword>
<evidence type="ECO:0000250" key="1">
    <source>
        <dbReference type="UniProtKB" id="Q6ZNA4"/>
    </source>
</evidence>
<evidence type="ECO:0000250" key="2">
    <source>
        <dbReference type="UniProtKB" id="Q6ZSG1"/>
    </source>
</evidence>
<evidence type="ECO:0000255" key="3">
    <source>
        <dbReference type="PROSITE-ProRule" id="PRU00175"/>
    </source>
</evidence>
<evidence type="ECO:0000256" key="4">
    <source>
        <dbReference type="SAM" id="MobiDB-lite"/>
    </source>
</evidence>
<evidence type="ECO:0000269" key="5">
    <source>
    </source>
</evidence>
<evidence type="ECO:0000269" key="6">
    <source>
    </source>
</evidence>
<evidence type="ECO:0000269" key="7">
    <source>
    </source>
</evidence>
<evidence type="ECO:0000269" key="8">
    <source>
    </source>
</evidence>
<evidence type="ECO:0000303" key="9">
    <source>
    </source>
</evidence>
<evidence type="ECO:0000303" key="10">
    <source>
    </source>
</evidence>
<evidence type="ECO:0000305" key="11"/>
<evidence type="ECO:0000305" key="12">
    <source>
    </source>
</evidence>
<evidence type="ECO:0000312" key="13">
    <source>
        <dbReference type="MGI" id="MGI:1934919"/>
    </source>
</evidence>
<gene>
    <name evidence="13" type="primary">Rnf111</name>
</gene>
<sequence length="989" mass="107896">MSQWTPEFNELYTLKVAMKSGTPDAPTTQESLKAVLLHPQPLGATKSFPAEVEMINSKVGNEFSHLCDDSQKQEKDMTGNQQEQEKSGVVRKKRKSQQAGPSYVQNCVKENQEILGRRQQLETPSDEDNDSSLSECLSSPSSSLHFGGSDTVTSDEDKEVSVRHTQPVLSAKSRSHSARSHKWPRTEADPVPSLLMKRPCFHGSALRRVTCRKRLVKSSSSQRTQKQKERMLVQRKKREALAQRKYALLSSSSSSSENDLSSDSSSSSSTDGEEDLCASASENPSNPAAPSGSIDEDVVVIEASFTPQVTANEEINVTSTDSEVEIVTVGESYRSRSTLGHSRSHWSQGSSSHTGRPQESRNRSRISTVIQPLRQNAAEVVDLTVDEDEPTIVPTTSARMDSQTTSASINNSNPSTSEQASDTTSTVASSQPSTVSETEATLTSNSATGSSVGDDVRRTASSAVPESGPPAMPRLPSCCPQHSPCGGTSQSHHALAHPHSSCFQQHGHHFQHHHHHHHTPHPAVPVSPSFSDPACPVERPQVQAPCGANSSSGSSYHDQQALPVDLSNSALRTHGSGGFHGASAFDPCCPVTSSRAAVFGHQAAAAPTQPLSIDGYGSSMVAQPQPQPPPQPSLSSCRHYMPPPYASLTRPLHHQASACHHSHGNAPPQTQPPPQVDYVIPHPVHAFHSQISSHAASHPVAPPPPTHLGSTAAPIPQHLPPAHQPISHHIPAPAPSAQRLHPHEVMQRMEVQRRRMMQHPTRAHERPPPHPHRMHPNYGHGHHIHVPQTMSSHPRQAPERTAWELGIEAGVTAATYTPGALHPHLAHYHAPPRLHHLQLGALPLMVPDMAGYPHIRYISSGLDGASFRGPFRGNFEELIHLEERLGNVNRGASQGTIERCTYPHKYKKVTTDWFSQRKLHCKQDGEEGTEEDTEEKCTICLSILEEGEDVRRLPCMHLFHQVCVDQWLITNKKCPICRVDIEAQLPSES</sequence>
<reference key="1">
    <citation type="journal article" date="2001" name="Nature">
        <title>Induction of the mammalian node requires Arkadia function in the extraembryonic lineages.</title>
        <authorList>
            <person name="Episkopou V."/>
            <person name="Arkell R."/>
            <person name="Timmons P.M."/>
            <person name="Walsh J.J."/>
            <person name="Andrew R.L."/>
            <person name="Swan D."/>
        </authorList>
    </citation>
    <scope>NUCLEOTIDE SEQUENCE [MRNA] (ISOFORM 1)</scope>
    <scope>FUNCTION</scope>
    <scope>TISSUE SPECIFICITY</scope>
    <scope>DEVELOPMENTAL STAGE</scope>
    <scope>DISRUPTION PHENOTYPE</scope>
    <source>
        <strain>129/Sv</strain>
    </source>
</reference>
<reference key="2">
    <citation type="journal article" date="2005" name="Science">
        <title>The transcriptional landscape of the mammalian genome.</title>
        <authorList>
            <person name="Carninci P."/>
            <person name="Kasukawa T."/>
            <person name="Katayama S."/>
            <person name="Gough J."/>
            <person name="Frith M.C."/>
            <person name="Maeda N."/>
            <person name="Oyama R."/>
            <person name="Ravasi T."/>
            <person name="Lenhard B."/>
            <person name="Wells C."/>
            <person name="Kodzius R."/>
            <person name="Shimokawa K."/>
            <person name="Bajic V.B."/>
            <person name="Brenner S.E."/>
            <person name="Batalov S."/>
            <person name="Forrest A.R."/>
            <person name="Zavolan M."/>
            <person name="Davis M.J."/>
            <person name="Wilming L.G."/>
            <person name="Aidinis V."/>
            <person name="Allen J.E."/>
            <person name="Ambesi-Impiombato A."/>
            <person name="Apweiler R."/>
            <person name="Aturaliya R.N."/>
            <person name="Bailey T.L."/>
            <person name="Bansal M."/>
            <person name="Baxter L."/>
            <person name="Beisel K.W."/>
            <person name="Bersano T."/>
            <person name="Bono H."/>
            <person name="Chalk A.M."/>
            <person name="Chiu K.P."/>
            <person name="Choudhary V."/>
            <person name="Christoffels A."/>
            <person name="Clutterbuck D.R."/>
            <person name="Crowe M.L."/>
            <person name="Dalla E."/>
            <person name="Dalrymple B.P."/>
            <person name="de Bono B."/>
            <person name="Della Gatta G."/>
            <person name="di Bernardo D."/>
            <person name="Down T."/>
            <person name="Engstrom P."/>
            <person name="Fagiolini M."/>
            <person name="Faulkner G."/>
            <person name="Fletcher C.F."/>
            <person name="Fukushima T."/>
            <person name="Furuno M."/>
            <person name="Futaki S."/>
            <person name="Gariboldi M."/>
            <person name="Georgii-Hemming P."/>
            <person name="Gingeras T.R."/>
            <person name="Gojobori T."/>
            <person name="Green R.E."/>
            <person name="Gustincich S."/>
            <person name="Harbers M."/>
            <person name="Hayashi Y."/>
            <person name="Hensch T.K."/>
            <person name="Hirokawa N."/>
            <person name="Hill D."/>
            <person name="Huminiecki L."/>
            <person name="Iacono M."/>
            <person name="Ikeo K."/>
            <person name="Iwama A."/>
            <person name="Ishikawa T."/>
            <person name="Jakt M."/>
            <person name="Kanapin A."/>
            <person name="Katoh M."/>
            <person name="Kawasawa Y."/>
            <person name="Kelso J."/>
            <person name="Kitamura H."/>
            <person name="Kitano H."/>
            <person name="Kollias G."/>
            <person name="Krishnan S.P."/>
            <person name="Kruger A."/>
            <person name="Kummerfeld S.K."/>
            <person name="Kurochkin I.V."/>
            <person name="Lareau L.F."/>
            <person name="Lazarevic D."/>
            <person name="Lipovich L."/>
            <person name="Liu J."/>
            <person name="Liuni S."/>
            <person name="McWilliam S."/>
            <person name="Madan Babu M."/>
            <person name="Madera M."/>
            <person name="Marchionni L."/>
            <person name="Matsuda H."/>
            <person name="Matsuzawa S."/>
            <person name="Miki H."/>
            <person name="Mignone F."/>
            <person name="Miyake S."/>
            <person name="Morris K."/>
            <person name="Mottagui-Tabar S."/>
            <person name="Mulder N."/>
            <person name="Nakano N."/>
            <person name="Nakauchi H."/>
            <person name="Ng P."/>
            <person name="Nilsson R."/>
            <person name="Nishiguchi S."/>
            <person name="Nishikawa S."/>
            <person name="Nori F."/>
            <person name="Ohara O."/>
            <person name="Okazaki Y."/>
            <person name="Orlando V."/>
            <person name="Pang K.C."/>
            <person name="Pavan W.J."/>
            <person name="Pavesi G."/>
            <person name="Pesole G."/>
            <person name="Petrovsky N."/>
            <person name="Piazza S."/>
            <person name="Reed J."/>
            <person name="Reid J.F."/>
            <person name="Ring B.Z."/>
            <person name="Ringwald M."/>
            <person name="Rost B."/>
            <person name="Ruan Y."/>
            <person name="Salzberg S.L."/>
            <person name="Sandelin A."/>
            <person name="Schneider C."/>
            <person name="Schoenbach C."/>
            <person name="Sekiguchi K."/>
            <person name="Semple C.A."/>
            <person name="Seno S."/>
            <person name="Sessa L."/>
            <person name="Sheng Y."/>
            <person name="Shibata Y."/>
            <person name="Shimada H."/>
            <person name="Shimada K."/>
            <person name="Silva D."/>
            <person name="Sinclair B."/>
            <person name="Sperling S."/>
            <person name="Stupka E."/>
            <person name="Sugiura K."/>
            <person name="Sultana R."/>
            <person name="Takenaka Y."/>
            <person name="Taki K."/>
            <person name="Tammoja K."/>
            <person name="Tan S.L."/>
            <person name="Tang S."/>
            <person name="Taylor M.S."/>
            <person name="Tegner J."/>
            <person name="Teichmann S.A."/>
            <person name="Ueda H.R."/>
            <person name="van Nimwegen E."/>
            <person name="Verardo R."/>
            <person name="Wei C.L."/>
            <person name="Yagi K."/>
            <person name="Yamanishi H."/>
            <person name="Zabarovsky E."/>
            <person name="Zhu S."/>
            <person name="Zimmer A."/>
            <person name="Hide W."/>
            <person name="Bult C."/>
            <person name="Grimmond S.M."/>
            <person name="Teasdale R.D."/>
            <person name="Liu E.T."/>
            <person name="Brusic V."/>
            <person name="Quackenbush J."/>
            <person name="Wahlestedt C."/>
            <person name="Mattick J.S."/>
            <person name="Hume D.A."/>
            <person name="Kai C."/>
            <person name="Sasaki D."/>
            <person name="Tomaru Y."/>
            <person name="Fukuda S."/>
            <person name="Kanamori-Katayama M."/>
            <person name="Suzuki M."/>
            <person name="Aoki J."/>
            <person name="Arakawa T."/>
            <person name="Iida J."/>
            <person name="Imamura K."/>
            <person name="Itoh M."/>
            <person name="Kato T."/>
            <person name="Kawaji H."/>
            <person name="Kawagashira N."/>
            <person name="Kawashima T."/>
            <person name="Kojima M."/>
            <person name="Kondo S."/>
            <person name="Konno H."/>
            <person name="Nakano K."/>
            <person name="Ninomiya N."/>
            <person name="Nishio T."/>
            <person name="Okada M."/>
            <person name="Plessy C."/>
            <person name="Shibata K."/>
            <person name="Shiraki T."/>
            <person name="Suzuki S."/>
            <person name="Tagami M."/>
            <person name="Waki K."/>
            <person name="Watahiki A."/>
            <person name="Okamura-Oho Y."/>
            <person name="Suzuki H."/>
            <person name="Kawai J."/>
            <person name="Hayashizaki Y."/>
        </authorList>
    </citation>
    <scope>NUCLEOTIDE SEQUENCE [LARGE SCALE MRNA] (ISOFORM 2)</scope>
    <source>
        <strain>C57BL/6J</strain>
        <tissue>Cerebellum</tissue>
        <tissue>Head</tissue>
        <tissue>Urinary bladder</tissue>
    </source>
</reference>
<reference key="3">
    <citation type="journal article" date="2004" name="Genome Res.">
        <title>The status, quality, and expansion of the NIH full-length cDNA project: the Mammalian Gene Collection (MGC).</title>
        <authorList>
            <consortium name="The MGC Project Team"/>
        </authorList>
    </citation>
    <scope>NUCLEOTIDE SEQUENCE [LARGE SCALE MRNA] (ISOFORM 2)</scope>
    <scope>NUCLEOTIDE SEQUENCE [LARGE SCALE MRNA] OF 805-989 (ISOFORM 1)</scope>
    <source>
        <strain>CD-1</strain>
        <strain>FVB/N-3</strain>
        <tissue>Mammary tumor</tissue>
        <tissue>Neural stem cell</tissue>
    </source>
</reference>
<reference key="4">
    <citation type="journal article" date="2003" name="EMBO J.">
        <title>Arkadia amplifies TGF-beta superfamily signaling through degradation of Smad7.</title>
        <authorList>
            <person name="Koinuma D."/>
            <person name="Shinozaki M."/>
            <person name="Komuro A."/>
            <person name="Goto K."/>
            <person name="Saitoh M."/>
            <person name="Hanyu A."/>
            <person name="Ebina M."/>
            <person name="Nukiwa T."/>
            <person name="Miyazawa K."/>
            <person name="Imamura T."/>
            <person name="Miyazono K."/>
        </authorList>
    </citation>
    <scope>FUNCTION</scope>
    <scope>MUTAGENESIS OF CYS-937</scope>
    <scope>INTERACTION WITH SMAD6 AND SMAD7</scope>
    <scope>SUBCELLULAR LOCATION</scope>
</reference>
<reference key="5">
    <citation type="journal article" date="2007" name="PLoS Biol.">
        <title>Arkadia enhances Nodal/TGF-beta signaling by coupling phospho-Smad2/3 activity and turnover.</title>
        <authorList>
            <person name="Mavrakis K.J."/>
            <person name="Andrew R.L."/>
            <person name="Lee K.L."/>
            <person name="Petropoulou C."/>
            <person name="Dixon J.E."/>
            <person name="Navaratnam N."/>
            <person name="Norris D.P."/>
            <person name="Episkopou V."/>
        </authorList>
    </citation>
    <scope>FUNCTION</scope>
    <scope>INTERACTION WITH SMAD2 AND SMAD3</scope>
</reference>
<reference key="6">
    <citation type="journal article" date="2013" name="Mol. Cell. Biol.">
        <title>Arkadia, a novel SUMO-targeted ubiquitin ligase involved in PML degradation.</title>
        <authorList>
            <person name="Erker Y."/>
            <person name="Neyret-Kahn H."/>
            <person name="Seeler J.S."/>
            <person name="Dejean A."/>
            <person name="Atfi A."/>
            <person name="Levy L."/>
        </authorList>
    </citation>
    <scope>FUNCTION</scope>
    <scope>SUBCELLULAR LOCATION</scope>
    <scope>DOMAIN</scope>
    <scope>MUTAGENESIS OF 298-VAL--ILE-301; 324-VAL--VAL-327; 380-VAL--LEU-383 AND CYS-937</scope>
</reference>
<dbReference type="EC" id="2.3.2.27" evidence="8"/>
<dbReference type="EMBL" id="AF330197">
    <property type="protein sequence ID" value="AAK38272.1"/>
    <property type="molecule type" value="mRNA"/>
</dbReference>
<dbReference type="EMBL" id="AK048110">
    <property type="protein sequence ID" value="BAC33245.1"/>
    <property type="molecule type" value="mRNA"/>
</dbReference>
<dbReference type="EMBL" id="AK036351">
    <property type="protein sequence ID" value="BAC29394.1"/>
    <property type="molecule type" value="mRNA"/>
</dbReference>
<dbReference type="EMBL" id="AK137148">
    <property type="protein sequence ID" value="BAE23252.1"/>
    <property type="molecule type" value="mRNA"/>
</dbReference>
<dbReference type="EMBL" id="BC054842">
    <property type="protein sequence ID" value="AAH54842.1"/>
    <property type="molecule type" value="mRNA"/>
</dbReference>
<dbReference type="EMBL" id="BC069835">
    <property type="protein sequence ID" value="AAH69835.1"/>
    <property type="molecule type" value="mRNA"/>
</dbReference>
<dbReference type="CCDS" id="CCDS23321.1">
    <molecule id="Q99ML9-1"/>
</dbReference>
<dbReference type="CCDS" id="CCDS90614.1">
    <molecule id="Q99ML9-2"/>
</dbReference>
<dbReference type="RefSeq" id="NP_001344423.1">
    <molecule id="Q99ML9-2"/>
    <property type="nucleotide sequence ID" value="NM_001357494.2"/>
</dbReference>
<dbReference type="RefSeq" id="NP_001408496.1">
    <molecule id="Q99ML9-1"/>
    <property type="nucleotide sequence ID" value="NM_001421567.1"/>
</dbReference>
<dbReference type="RefSeq" id="NP_001408497.1">
    <molecule id="Q99ML9-2"/>
    <property type="nucleotide sequence ID" value="NM_001421568.1"/>
</dbReference>
<dbReference type="RefSeq" id="NP_291082.1">
    <molecule id="Q99ML9-1"/>
    <property type="nucleotide sequence ID" value="NM_033604.3"/>
</dbReference>
<dbReference type="RefSeq" id="XP_006511649.1">
    <property type="nucleotide sequence ID" value="XM_006511586.2"/>
</dbReference>
<dbReference type="BMRB" id="Q99ML9"/>
<dbReference type="SMR" id="Q99ML9"/>
<dbReference type="BioGRID" id="220311">
    <property type="interactions" value="13"/>
</dbReference>
<dbReference type="FunCoup" id="Q99ML9">
    <property type="interactions" value="4674"/>
</dbReference>
<dbReference type="IntAct" id="Q99ML9">
    <property type="interactions" value="7"/>
</dbReference>
<dbReference type="MINT" id="Q99ML9"/>
<dbReference type="STRING" id="10090.ENSMUSP00000034739"/>
<dbReference type="GlyGen" id="Q99ML9">
    <property type="glycosylation" value="2 sites, 1 O-linked glycan (1 site)"/>
</dbReference>
<dbReference type="PhosphoSitePlus" id="Q99ML9"/>
<dbReference type="PaxDb" id="10090-ENSMUSP00000034739"/>
<dbReference type="ProteomicsDB" id="299914">
    <molecule id="Q99ML9-1"/>
</dbReference>
<dbReference type="ProteomicsDB" id="299915">
    <molecule id="Q99ML9-2"/>
</dbReference>
<dbReference type="Antibodypedia" id="25360">
    <property type="antibodies" value="132 antibodies from 26 providers"/>
</dbReference>
<dbReference type="DNASU" id="93836"/>
<dbReference type="Ensembl" id="ENSMUST00000034739.12">
    <molecule id="Q99ML9-1"/>
    <property type="protein sequence ID" value="ENSMUSP00000034739.6"/>
    <property type="gene ID" value="ENSMUSG00000032217.14"/>
</dbReference>
<dbReference type="Ensembl" id="ENSMUST00000113595.2">
    <molecule id="Q99ML9-1"/>
    <property type="protein sequence ID" value="ENSMUSP00000109225.2"/>
    <property type="gene ID" value="ENSMUSG00000032217.14"/>
</dbReference>
<dbReference type="Ensembl" id="ENSMUST00000215848.2">
    <molecule id="Q99ML9-2"/>
    <property type="protein sequence ID" value="ENSMUSP00000149445.2"/>
    <property type="gene ID" value="ENSMUSG00000032217.14"/>
</dbReference>
<dbReference type="GeneID" id="93836"/>
<dbReference type="KEGG" id="mmu:93836"/>
<dbReference type="UCSC" id="uc009qoa.1">
    <molecule id="Q99ML9-2"/>
    <property type="organism name" value="mouse"/>
</dbReference>
<dbReference type="UCSC" id="uc009qoe.1">
    <molecule id="Q99ML9-1"/>
    <property type="organism name" value="mouse"/>
</dbReference>
<dbReference type="AGR" id="MGI:1934919"/>
<dbReference type="CTD" id="54778"/>
<dbReference type="MGI" id="MGI:1934919">
    <property type="gene designation" value="Rnf111"/>
</dbReference>
<dbReference type="VEuPathDB" id="HostDB:ENSMUSG00000032217"/>
<dbReference type="eggNOG" id="KOG0800">
    <property type="taxonomic scope" value="Eukaryota"/>
</dbReference>
<dbReference type="GeneTree" id="ENSGT00940000157691"/>
<dbReference type="HOGENOM" id="CLU_309031_0_0_1"/>
<dbReference type="InParanoid" id="Q99ML9"/>
<dbReference type="OMA" id="HTNRPQE"/>
<dbReference type="OrthoDB" id="8062037at2759"/>
<dbReference type="PhylomeDB" id="Q99ML9"/>
<dbReference type="TreeFam" id="TF331862"/>
<dbReference type="Reactome" id="R-MMU-2173796">
    <property type="pathway name" value="SMAD2/SMAD3:SMAD4 heterotrimer regulates transcription"/>
</dbReference>
<dbReference type="Reactome" id="R-MMU-5696395">
    <property type="pathway name" value="Formation of Incision Complex in GG-NER"/>
</dbReference>
<dbReference type="Reactome" id="R-MMU-983168">
    <property type="pathway name" value="Antigen processing: Ubiquitination &amp; Proteasome degradation"/>
</dbReference>
<dbReference type="UniPathway" id="UPA00143"/>
<dbReference type="BioGRID-ORCS" id="93836">
    <property type="hits" value="1 hit in 77 CRISPR screens"/>
</dbReference>
<dbReference type="ChiTaRS" id="Rnf111">
    <property type="organism name" value="mouse"/>
</dbReference>
<dbReference type="PRO" id="PR:Q99ML9"/>
<dbReference type="Proteomes" id="UP000000589">
    <property type="component" value="Chromosome 9"/>
</dbReference>
<dbReference type="RNAct" id="Q99ML9">
    <property type="molecule type" value="protein"/>
</dbReference>
<dbReference type="Bgee" id="ENSMUSG00000032217">
    <property type="expression patterns" value="Expressed in animal zygote and 254 other cell types or tissues"/>
</dbReference>
<dbReference type="ExpressionAtlas" id="Q99ML9">
    <property type="expression patterns" value="baseline and differential"/>
</dbReference>
<dbReference type="GO" id="GO:0005737">
    <property type="term" value="C:cytoplasm"/>
    <property type="evidence" value="ECO:0000314"/>
    <property type="project" value="BHF-UCL"/>
</dbReference>
<dbReference type="GO" id="GO:0005829">
    <property type="term" value="C:cytosol"/>
    <property type="evidence" value="ECO:0007669"/>
    <property type="project" value="Ensembl"/>
</dbReference>
<dbReference type="GO" id="GO:0005654">
    <property type="term" value="C:nucleoplasm"/>
    <property type="evidence" value="ECO:0000304"/>
    <property type="project" value="Reactome"/>
</dbReference>
<dbReference type="GO" id="GO:0005634">
    <property type="term" value="C:nucleus"/>
    <property type="evidence" value="ECO:0000314"/>
    <property type="project" value="BHF-UCL"/>
</dbReference>
<dbReference type="GO" id="GO:0016605">
    <property type="term" value="C:PML body"/>
    <property type="evidence" value="ECO:0007669"/>
    <property type="project" value="UniProtKB-SubCell"/>
</dbReference>
<dbReference type="GO" id="GO:0032991">
    <property type="term" value="C:protein-containing complex"/>
    <property type="evidence" value="ECO:0000314"/>
    <property type="project" value="MGI"/>
</dbReference>
<dbReference type="GO" id="GO:0032184">
    <property type="term" value="F:SUMO polymer binding"/>
    <property type="evidence" value="ECO:0000250"/>
    <property type="project" value="UniProtKB"/>
</dbReference>
<dbReference type="GO" id="GO:0061630">
    <property type="term" value="F:ubiquitin protein ligase activity"/>
    <property type="evidence" value="ECO:0000315"/>
    <property type="project" value="BHF-UCL"/>
</dbReference>
<dbReference type="GO" id="GO:0004842">
    <property type="term" value="F:ubiquitin-protein transferase activity"/>
    <property type="evidence" value="ECO:0000304"/>
    <property type="project" value="Reactome"/>
</dbReference>
<dbReference type="GO" id="GO:0008270">
    <property type="term" value="F:zinc ion binding"/>
    <property type="evidence" value="ECO:0007669"/>
    <property type="project" value="UniProtKB-KW"/>
</dbReference>
<dbReference type="GO" id="GO:0006281">
    <property type="term" value="P:DNA repair"/>
    <property type="evidence" value="ECO:0007669"/>
    <property type="project" value="UniProtKB-KW"/>
</dbReference>
<dbReference type="GO" id="GO:0007389">
    <property type="term" value="P:pattern specification process"/>
    <property type="evidence" value="ECO:0000315"/>
    <property type="project" value="MGI"/>
</dbReference>
<dbReference type="GO" id="GO:0031398">
    <property type="term" value="P:positive regulation of protein ubiquitination"/>
    <property type="evidence" value="ECO:0000314"/>
    <property type="project" value="MGI"/>
</dbReference>
<dbReference type="GO" id="GO:0030511">
    <property type="term" value="P:positive regulation of transforming growth factor beta receptor signaling pathway"/>
    <property type="evidence" value="ECO:0000314"/>
    <property type="project" value="MGI"/>
</dbReference>
<dbReference type="GO" id="GO:0000209">
    <property type="term" value="P:protein polyubiquitination"/>
    <property type="evidence" value="ECO:0000314"/>
    <property type="project" value="MGI"/>
</dbReference>
<dbReference type="GO" id="GO:0006511">
    <property type="term" value="P:ubiquitin-dependent protein catabolic process"/>
    <property type="evidence" value="ECO:0000314"/>
    <property type="project" value="MGI"/>
</dbReference>
<dbReference type="CDD" id="cd16681">
    <property type="entry name" value="RING-H2_RNF111"/>
    <property type="match status" value="1"/>
</dbReference>
<dbReference type="FunFam" id="3.30.40.10:FF:000165">
    <property type="entry name" value="E3 ubiquitin-protein ligase Arkadia isoform X1"/>
    <property type="match status" value="1"/>
</dbReference>
<dbReference type="Gene3D" id="3.30.40.10">
    <property type="entry name" value="Zinc/RING finger domain, C3HC4 (zinc finger)"/>
    <property type="match status" value="1"/>
</dbReference>
<dbReference type="InterPro" id="IPR029306">
    <property type="entry name" value="RNF111_N"/>
</dbReference>
<dbReference type="InterPro" id="IPR001841">
    <property type="entry name" value="Znf_RING"/>
</dbReference>
<dbReference type="InterPro" id="IPR013083">
    <property type="entry name" value="Znf_RING/FYVE/PHD"/>
</dbReference>
<dbReference type="InterPro" id="IPR051073">
    <property type="entry name" value="ZNRF3_Arkadia_E3_ligases"/>
</dbReference>
<dbReference type="PANTHER" id="PTHR16200">
    <property type="entry name" value="RING ZINC FINGER"/>
    <property type="match status" value="1"/>
</dbReference>
<dbReference type="Pfam" id="PF15303">
    <property type="entry name" value="RNF111_N"/>
    <property type="match status" value="1"/>
</dbReference>
<dbReference type="Pfam" id="PF13639">
    <property type="entry name" value="zf-RING_2"/>
    <property type="match status" value="1"/>
</dbReference>
<dbReference type="SMART" id="SM00184">
    <property type="entry name" value="RING"/>
    <property type="match status" value="1"/>
</dbReference>
<dbReference type="SUPFAM" id="SSF57850">
    <property type="entry name" value="RING/U-box"/>
    <property type="match status" value="1"/>
</dbReference>
<dbReference type="PROSITE" id="PS50089">
    <property type="entry name" value="ZF_RING_2"/>
    <property type="match status" value="1"/>
</dbReference>
<accession>Q99ML9</accession>
<accession>Q3UVL7</accession>
<accession>Q6NSW2</accession>
<accession>Q7TMR3</accession>
<accession>Q8C881</accession>
<accession>Q8CBC0</accession>
<feature type="chain" id="PRO_0000280691" description="E3 ubiquitin-protein ligase Arkadia">
    <location>
        <begin position="1"/>
        <end position="989"/>
    </location>
</feature>
<feature type="zinc finger region" description="RING-type; atypical" evidence="3">
    <location>
        <begin position="937"/>
        <end position="978"/>
    </location>
</feature>
<feature type="region of interest" description="Disordered" evidence="4">
    <location>
        <begin position="63"/>
        <end position="195"/>
    </location>
</feature>
<feature type="region of interest" description="Disordered" evidence="4">
    <location>
        <begin position="213"/>
        <end position="293"/>
    </location>
</feature>
<feature type="region of interest" description="Interaction with AXIN1" evidence="2">
    <location>
        <begin position="240"/>
        <end position="402"/>
    </location>
</feature>
<feature type="region of interest" description="Disordered" evidence="4">
    <location>
        <begin position="335"/>
        <end position="367"/>
    </location>
</feature>
<feature type="region of interest" description="Disordered" evidence="4">
    <location>
        <begin position="388"/>
        <end position="475"/>
    </location>
</feature>
<feature type="region of interest" description="Disordered" evidence="4">
    <location>
        <begin position="506"/>
        <end position="559"/>
    </location>
</feature>
<feature type="region of interest" description="Disordered" evidence="4">
    <location>
        <begin position="641"/>
        <end position="675"/>
    </location>
</feature>
<feature type="region of interest" description="Ubiquitin binding" evidence="2">
    <location>
        <begin position="902"/>
        <end position="904"/>
    </location>
</feature>
<feature type="region of interest" description="Ubiquitin binding" evidence="2">
    <location>
        <begin position="952"/>
        <end position="956"/>
    </location>
</feature>
<feature type="short sequence motif" description="SUMO interaction motif 1 (SIM)" evidence="8">
    <location>
        <begin position="298"/>
        <end position="302"/>
    </location>
</feature>
<feature type="short sequence motif" description="SUMO interaction motif 2 (SIM)" evidence="8">
    <location>
        <begin position="323"/>
        <end position="329"/>
    </location>
</feature>
<feature type="short sequence motif" description="SUMO interaction motif 3 (SIM)" evidence="8">
    <location>
        <begin position="380"/>
        <end position="384"/>
    </location>
</feature>
<feature type="compositionally biased region" description="Basic and acidic residues" evidence="4">
    <location>
        <begin position="65"/>
        <end position="88"/>
    </location>
</feature>
<feature type="compositionally biased region" description="Polar residues" evidence="4">
    <location>
        <begin position="97"/>
        <end position="109"/>
    </location>
</feature>
<feature type="compositionally biased region" description="Basic and acidic residues" evidence="4">
    <location>
        <begin position="110"/>
        <end position="120"/>
    </location>
</feature>
<feature type="compositionally biased region" description="Low complexity" evidence="4">
    <location>
        <begin position="131"/>
        <end position="144"/>
    </location>
</feature>
<feature type="compositionally biased region" description="Basic residues" evidence="4">
    <location>
        <begin position="173"/>
        <end position="183"/>
    </location>
</feature>
<feature type="compositionally biased region" description="Low complexity" evidence="4">
    <location>
        <begin position="248"/>
        <end position="270"/>
    </location>
</feature>
<feature type="compositionally biased region" description="Low complexity" evidence="4">
    <location>
        <begin position="278"/>
        <end position="291"/>
    </location>
</feature>
<feature type="compositionally biased region" description="Low complexity" evidence="4">
    <location>
        <begin position="345"/>
        <end position="355"/>
    </location>
</feature>
<feature type="compositionally biased region" description="Polar residues" evidence="4">
    <location>
        <begin position="393"/>
        <end position="451"/>
    </location>
</feature>
<feature type="compositionally biased region" description="Basic residues" evidence="4">
    <location>
        <begin position="506"/>
        <end position="520"/>
    </location>
</feature>
<feature type="compositionally biased region" description="Polar residues" evidence="4">
    <location>
        <begin position="548"/>
        <end position="558"/>
    </location>
</feature>
<feature type="binding site" evidence="2">
    <location>
        <position position="937"/>
    </location>
    <ligand>
        <name>Zn(2+)</name>
        <dbReference type="ChEBI" id="CHEBI:29105"/>
    </ligand>
</feature>
<feature type="binding site" evidence="2">
    <location>
        <position position="940"/>
    </location>
    <ligand>
        <name>Zn(2+)</name>
        <dbReference type="ChEBI" id="CHEBI:29105"/>
    </ligand>
</feature>
<feature type="binding site" evidence="2">
    <location>
        <position position="960"/>
    </location>
    <ligand>
        <name>Zn(2+)</name>
        <dbReference type="ChEBI" id="CHEBI:29105"/>
    </ligand>
</feature>
<feature type="binding site" evidence="2">
    <location>
        <position position="963"/>
    </location>
    <ligand>
        <name>Zn(2+)</name>
        <dbReference type="ChEBI" id="CHEBI:29105"/>
    </ligand>
</feature>
<feature type="cross-link" description="Glycyl lysine isopeptide (Lys-Gly) (interchain with G-Cter in SUMO2)" evidence="1">
    <location>
        <position position="19"/>
    </location>
</feature>
<feature type="cross-link" description="Glycyl lysine isopeptide (Lys-Gly) (interchain with G-Cter in SUMO2)" evidence="1">
    <location>
        <position position="33"/>
    </location>
</feature>
<feature type="cross-link" description="Glycyl lysine isopeptide (Lys-Gly) (interchain with G-Cter in SUMO2)" evidence="1">
    <location>
        <position position="46"/>
    </location>
</feature>
<feature type="cross-link" description="Glycyl lysine isopeptide (Lys-Gly) (interchain with G-Cter in SUMO2)" evidence="1">
    <location>
        <position position="58"/>
    </location>
</feature>
<feature type="cross-link" description="Glycyl lysine isopeptide (Lys-Gly) (interchain with G-Cter in SUMO2)" evidence="1">
    <location>
        <position position="72"/>
    </location>
</feature>
<feature type="cross-link" description="Glycyl lysine isopeptide (Lys-Gly) (interchain with G-Cter in SUMO2)" evidence="1">
    <location>
        <position position="86"/>
    </location>
</feature>
<feature type="cross-link" description="Glycyl lysine isopeptide (Lys-Gly) (interchain with G-Cter in SUMO2)" evidence="1">
    <location>
        <position position="95"/>
    </location>
</feature>
<feature type="cross-link" description="Glycyl lysine isopeptide (Lys-Gly) (interchain with G-Cter in SUMO2)" evidence="1">
    <location>
        <position position="109"/>
    </location>
</feature>
<feature type="cross-link" description="Glycyl lysine isopeptide (Lys-Gly) (interchain with G-Cter in SUMO2)" evidence="1">
    <location>
        <position position="172"/>
    </location>
</feature>
<feature type="cross-link" description="Glycyl lysine isopeptide (Lys-Gly) (interchain with G-Cter in SUMO2)" evidence="1">
    <location>
        <position position="197"/>
    </location>
</feature>
<feature type="cross-link" description="Glycyl lysine isopeptide (Lys-Gly) (interchain with G-Cter in SUMO2)" evidence="1">
    <location>
        <position position="217"/>
    </location>
</feature>
<feature type="cross-link" description="Glycyl lysine isopeptide (Lys-Gly) (interchain with G-Cter in SUMO2)" evidence="1">
    <location>
        <position position="918"/>
    </location>
</feature>
<feature type="cross-link" description="Glycyl lysine isopeptide (Lys-Gly) (interchain with G-Cter in SUMO2)" evidence="1">
    <location>
        <position position="922"/>
    </location>
</feature>
<feature type="splice variant" id="VSP_023842" description="In isoform 2." evidence="9 10">
    <location>
        <begin position="909"/>
        <end position="916"/>
    </location>
</feature>
<feature type="mutagenesis site" description="Abolishes binding to sumoylated proteins and ubiquitination and degradation of PML; when associated with 326-A--A-329 and 382-A--A-385." evidence="8">
    <original>VVVI</original>
    <variation>AVAA</variation>
    <location>
        <begin position="298"/>
        <end position="301"/>
    </location>
</feature>
<feature type="mutagenesis site" description="Abolishes binding to sumoylated proteins and ubiquitination and degradation of PML; when associated with 300-A--A-303 and 382-A--A-385." evidence="8">
    <original>VEIV</original>
    <variation>AEAA</variation>
    <location>
        <begin position="324"/>
        <end position="327"/>
    </location>
</feature>
<feature type="mutagenesis site" description="Abolishes binding to sumoylated proteins and ubiquitination and degradation of PML; when associated with 300-A--A-303 and 326-A--A-329." evidence="8">
    <original>VVDL</original>
    <variation>AADA</variation>
    <location>
        <begin position="380"/>
        <end position="383"/>
    </location>
</feature>
<feature type="mutagenesis site" description="No effect on TGF-beta and BMP signaling." evidence="6 8">
    <original>C</original>
    <variation>A</variation>
    <location>
        <position position="937"/>
    </location>
</feature>
<feature type="sequence conflict" description="In Ref. 2; BAC29394." evidence="11" ref="2">
    <original>L</original>
    <variation>V</variation>
    <location>
        <position position="121"/>
    </location>
</feature>
<feature type="sequence conflict" description="In Ref. 2; BAC33245." evidence="11" ref="2">
    <original>S</original>
    <variation>G</variation>
    <location>
        <position position="219"/>
    </location>
</feature>
<feature type="sequence conflict" description="In Ref. 2; BAC33245." evidence="11" ref="2">
    <original>S</original>
    <variation>N</variation>
    <location>
        <position position="256"/>
    </location>
</feature>
<feature type="sequence conflict" description="In Ref. 3; AAH54842." evidence="11" ref="3">
    <original>L</original>
    <variation>V</variation>
    <location>
        <position position="805"/>
    </location>
</feature>
<organism>
    <name type="scientific">Mus musculus</name>
    <name type="common">Mouse</name>
    <dbReference type="NCBI Taxonomy" id="10090"/>
    <lineage>
        <taxon>Eukaryota</taxon>
        <taxon>Metazoa</taxon>
        <taxon>Chordata</taxon>
        <taxon>Craniata</taxon>
        <taxon>Vertebrata</taxon>
        <taxon>Euteleostomi</taxon>
        <taxon>Mammalia</taxon>
        <taxon>Eutheria</taxon>
        <taxon>Euarchontoglires</taxon>
        <taxon>Glires</taxon>
        <taxon>Rodentia</taxon>
        <taxon>Myomorpha</taxon>
        <taxon>Muroidea</taxon>
        <taxon>Muridae</taxon>
        <taxon>Murinae</taxon>
        <taxon>Mus</taxon>
        <taxon>Mus</taxon>
    </lineage>
</organism>